<sequence>MKHLAIFGSTGSVGQQALAIIRSLPHLFNVVALASYGNKRDLFFEQIREFSPSIVSVYDEQLYFEIRKEFPKVQAFLCEEGLLAAATANEIDTIVAASSGIVALPAIIAAMRSGKTLALANKEVLVSAGELINGLAQQYQTKILPIDSEHNALYQCLEGRDTSEVRKLFLTASGGPLLYKSKEELTRVTIQDVLKHPIWNMGAKITVDSSTLVNKGLEIIEAYWLFGLEHAEIDAVIHPQSLIHGMVEFEDGTVLSVMNPPSMLFPIQHVLTTPKRCPAPHKGMDFSIKQILEFFPIDEERFPSIALARQVLQDKGSSGPFFNAANEILVQRFLKKEIAWCDILDKLTRLMKNHRVSSCTSLDDVFSVDKEARALAQEI</sequence>
<gene>
    <name evidence="1" type="primary">dxr</name>
    <name type="ordered locus">CAB427</name>
</gene>
<feature type="chain" id="PRO_0000163632" description="1-deoxy-D-xylulose 5-phosphate reductoisomerase">
    <location>
        <begin position="1"/>
        <end position="379"/>
    </location>
</feature>
<feature type="binding site" evidence="1">
    <location>
        <position position="10"/>
    </location>
    <ligand>
        <name>NADPH</name>
        <dbReference type="ChEBI" id="CHEBI:57783"/>
    </ligand>
</feature>
<feature type="binding site" evidence="1">
    <location>
        <position position="11"/>
    </location>
    <ligand>
        <name>NADPH</name>
        <dbReference type="ChEBI" id="CHEBI:57783"/>
    </ligand>
</feature>
<feature type="binding site" evidence="1">
    <location>
        <position position="12"/>
    </location>
    <ligand>
        <name>NADPH</name>
        <dbReference type="ChEBI" id="CHEBI:57783"/>
    </ligand>
</feature>
<feature type="binding site" evidence="1">
    <location>
        <position position="13"/>
    </location>
    <ligand>
        <name>NADPH</name>
        <dbReference type="ChEBI" id="CHEBI:57783"/>
    </ligand>
</feature>
<feature type="binding site" evidence="1">
    <location>
        <position position="121"/>
    </location>
    <ligand>
        <name>NADPH</name>
        <dbReference type="ChEBI" id="CHEBI:57783"/>
    </ligand>
</feature>
<feature type="binding site" evidence="1">
    <location>
        <position position="122"/>
    </location>
    <ligand>
        <name>1-deoxy-D-xylulose 5-phosphate</name>
        <dbReference type="ChEBI" id="CHEBI:57792"/>
    </ligand>
</feature>
<feature type="binding site" evidence="1">
    <location>
        <position position="123"/>
    </location>
    <ligand>
        <name>NADPH</name>
        <dbReference type="ChEBI" id="CHEBI:57783"/>
    </ligand>
</feature>
<feature type="binding site" evidence="1">
    <location>
        <position position="147"/>
    </location>
    <ligand>
        <name>Mn(2+)</name>
        <dbReference type="ChEBI" id="CHEBI:29035"/>
    </ligand>
</feature>
<feature type="binding site" evidence="1">
    <location>
        <position position="148"/>
    </location>
    <ligand>
        <name>1-deoxy-D-xylulose 5-phosphate</name>
        <dbReference type="ChEBI" id="CHEBI:57792"/>
    </ligand>
</feature>
<feature type="binding site" evidence="1">
    <location>
        <position position="149"/>
    </location>
    <ligand>
        <name>1-deoxy-D-xylulose 5-phosphate</name>
        <dbReference type="ChEBI" id="CHEBI:57792"/>
    </ligand>
</feature>
<feature type="binding site" evidence="1">
    <location>
        <position position="149"/>
    </location>
    <ligand>
        <name>Mn(2+)</name>
        <dbReference type="ChEBI" id="CHEBI:29035"/>
    </ligand>
</feature>
<feature type="binding site" evidence="1">
    <location>
        <position position="173"/>
    </location>
    <ligand>
        <name>1-deoxy-D-xylulose 5-phosphate</name>
        <dbReference type="ChEBI" id="CHEBI:57792"/>
    </ligand>
</feature>
<feature type="binding site" evidence="1">
    <location>
        <position position="196"/>
    </location>
    <ligand>
        <name>1-deoxy-D-xylulose 5-phosphate</name>
        <dbReference type="ChEBI" id="CHEBI:57792"/>
    </ligand>
</feature>
<feature type="binding site" evidence="1">
    <location>
        <position position="202"/>
    </location>
    <ligand>
        <name>NADPH</name>
        <dbReference type="ChEBI" id="CHEBI:57783"/>
    </ligand>
</feature>
<feature type="binding site" evidence="1">
    <location>
        <position position="209"/>
    </location>
    <ligand>
        <name>1-deoxy-D-xylulose 5-phosphate</name>
        <dbReference type="ChEBI" id="CHEBI:57792"/>
    </ligand>
</feature>
<feature type="binding site" evidence="1">
    <location>
        <position position="214"/>
    </location>
    <ligand>
        <name>1-deoxy-D-xylulose 5-phosphate</name>
        <dbReference type="ChEBI" id="CHEBI:57792"/>
    </ligand>
</feature>
<feature type="binding site" evidence="1">
    <location>
        <position position="215"/>
    </location>
    <ligand>
        <name>1-deoxy-D-xylulose 5-phosphate</name>
        <dbReference type="ChEBI" id="CHEBI:57792"/>
    </ligand>
</feature>
<feature type="binding site" evidence="1">
    <location>
        <position position="218"/>
    </location>
    <ligand>
        <name>1-deoxy-D-xylulose 5-phosphate</name>
        <dbReference type="ChEBI" id="CHEBI:57792"/>
    </ligand>
</feature>
<feature type="binding site" evidence="1">
    <location>
        <position position="218"/>
    </location>
    <ligand>
        <name>Mn(2+)</name>
        <dbReference type="ChEBI" id="CHEBI:29035"/>
    </ligand>
</feature>
<accession>Q5L651</accession>
<name>DXR_CHLAB</name>
<proteinExistence type="inferred from homology"/>
<evidence type="ECO:0000255" key="1">
    <source>
        <dbReference type="HAMAP-Rule" id="MF_00183"/>
    </source>
</evidence>
<comment type="function">
    <text evidence="1">Catalyzes the NADPH-dependent rearrangement and reduction of 1-deoxy-D-xylulose-5-phosphate (DXP) to 2-C-methyl-D-erythritol 4-phosphate (MEP).</text>
</comment>
<comment type="catalytic activity">
    <reaction evidence="1">
        <text>2-C-methyl-D-erythritol 4-phosphate + NADP(+) = 1-deoxy-D-xylulose 5-phosphate + NADPH + H(+)</text>
        <dbReference type="Rhea" id="RHEA:13717"/>
        <dbReference type="ChEBI" id="CHEBI:15378"/>
        <dbReference type="ChEBI" id="CHEBI:57783"/>
        <dbReference type="ChEBI" id="CHEBI:57792"/>
        <dbReference type="ChEBI" id="CHEBI:58262"/>
        <dbReference type="ChEBI" id="CHEBI:58349"/>
        <dbReference type="EC" id="1.1.1.267"/>
    </reaction>
    <physiologicalReaction direction="right-to-left" evidence="1">
        <dbReference type="Rhea" id="RHEA:13719"/>
    </physiologicalReaction>
</comment>
<comment type="cofactor">
    <cofactor evidence="1">
        <name>Mg(2+)</name>
        <dbReference type="ChEBI" id="CHEBI:18420"/>
    </cofactor>
    <cofactor evidence="1">
        <name>Mn(2+)</name>
        <dbReference type="ChEBI" id="CHEBI:29035"/>
    </cofactor>
</comment>
<comment type="pathway">
    <text evidence="1">Isoprenoid biosynthesis; isopentenyl diphosphate biosynthesis via DXP pathway; isopentenyl diphosphate from 1-deoxy-D-xylulose 5-phosphate: step 1/6.</text>
</comment>
<comment type="similarity">
    <text evidence="1">Belongs to the DXR family.</text>
</comment>
<organism>
    <name type="scientific">Chlamydia abortus (strain DSM 27085 / S26/3)</name>
    <name type="common">Chlamydophila abortus</name>
    <dbReference type="NCBI Taxonomy" id="218497"/>
    <lineage>
        <taxon>Bacteria</taxon>
        <taxon>Pseudomonadati</taxon>
        <taxon>Chlamydiota</taxon>
        <taxon>Chlamydiia</taxon>
        <taxon>Chlamydiales</taxon>
        <taxon>Chlamydiaceae</taxon>
        <taxon>Chlamydia/Chlamydophila group</taxon>
        <taxon>Chlamydia</taxon>
    </lineage>
</organism>
<dbReference type="EC" id="1.1.1.267" evidence="1"/>
<dbReference type="EMBL" id="CR848038">
    <property type="protein sequence ID" value="CAH63880.1"/>
    <property type="molecule type" value="Genomic_DNA"/>
</dbReference>
<dbReference type="RefSeq" id="WP_011097063.1">
    <property type="nucleotide sequence ID" value="NC_004552.2"/>
</dbReference>
<dbReference type="SMR" id="Q5L651"/>
<dbReference type="KEGG" id="cab:CAB427"/>
<dbReference type="eggNOG" id="COG0743">
    <property type="taxonomic scope" value="Bacteria"/>
</dbReference>
<dbReference type="HOGENOM" id="CLU_035714_4_0_0"/>
<dbReference type="OrthoDB" id="9806546at2"/>
<dbReference type="UniPathway" id="UPA00056">
    <property type="reaction ID" value="UER00092"/>
</dbReference>
<dbReference type="Proteomes" id="UP000001012">
    <property type="component" value="Chromosome"/>
</dbReference>
<dbReference type="GO" id="GO:0030604">
    <property type="term" value="F:1-deoxy-D-xylulose-5-phosphate reductoisomerase activity"/>
    <property type="evidence" value="ECO:0007669"/>
    <property type="project" value="UniProtKB-UniRule"/>
</dbReference>
<dbReference type="GO" id="GO:0030145">
    <property type="term" value="F:manganese ion binding"/>
    <property type="evidence" value="ECO:0007669"/>
    <property type="project" value="TreeGrafter"/>
</dbReference>
<dbReference type="GO" id="GO:0070402">
    <property type="term" value="F:NADPH binding"/>
    <property type="evidence" value="ECO:0007669"/>
    <property type="project" value="InterPro"/>
</dbReference>
<dbReference type="GO" id="GO:0051484">
    <property type="term" value="P:isopentenyl diphosphate biosynthetic process, methylerythritol 4-phosphate pathway involved in terpenoid biosynthetic process"/>
    <property type="evidence" value="ECO:0007669"/>
    <property type="project" value="TreeGrafter"/>
</dbReference>
<dbReference type="FunFam" id="3.40.50.720:FF:000045">
    <property type="entry name" value="1-deoxy-D-xylulose 5-phosphate reductoisomerase"/>
    <property type="match status" value="1"/>
</dbReference>
<dbReference type="Gene3D" id="1.10.1740.10">
    <property type="match status" value="1"/>
</dbReference>
<dbReference type="Gene3D" id="3.40.50.720">
    <property type="entry name" value="NAD(P)-binding Rossmann-like Domain"/>
    <property type="match status" value="1"/>
</dbReference>
<dbReference type="HAMAP" id="MF_00183">
    <property type="entry name" value="DXP_reductoisom"/>
    <property type="match status" value="1"/>
</dbReference>
<dbReference type="InterPro" id="IPR003821">
    <property type="entry name" value="DXP_reductoisomerase"/>
</dbReference>
<dbReference type="InterPro" id="IPR013644">
    <property type="entry name" value="DXP_reductoisomerase_C"/>
</dbReference>
<dbReference type="InterPro" id="IPR013512">
    <property type="entry name" value="DXP_reductoisomerase_N"/>
</dbReference>
<dbReference type="InterPro" id="IPR026877">
    <property type="entry name" value="DXPR_C"/>
</dbReference>
<dbReference type="InterPro" id="IPR036169">
    <property type="entry name" value="DXPR_C_sf"/>
</dbReference>
<dbReference type="InterPro" id="IPR036291">
    <property type="entry name" value="NAD(P)-bd_dom_sf"/>
</dbReference>
<dbReference type="NCBIfam" id="TIGR00243">
    <property type="entry name" value="Dxr"/>
    <property type="match status" value="1"/>
</dbReference>
<dbReference type="PANTHER" id="PTHR30525">
    <property type="entry name" value="1-DEOXY-D-XYLULOSE 5-PHOSPHATE REDUCTOISOMERASE"/>
    <property type="match status" value="1"/>
</dbReference>
<dbReference type="PANTHER" id="PTHR30525:SF0">
    <property type="entry name" value="1-DEOXY-D-XYLULOSE 5-PHOSPHATE REDUCTOISOMERASE, CHLOROPLASTIC"/>
    <property type="match status" value="1"/>
</dbReference>
<dbReference type="Pfam" id="PF08436">
    <property type="entry name" value="DXP_redisom_C"/>
    <property type="match status" value="1"/>
</dbReference>
<dbReference type="Pfam" id="PF02670">
    <property type="entry name" value="DXP_reductoisom"/>
    <property type="match status" value="1"/>
</dbReference>
<dbReference type="Pfam" id="PF13288">
    <property type="entry name" value="DXPR_C"/>
    <property type="match status" value="1"/>
</dbReference>
<dbReference type="PIRSF" id="PIRSF006205">
    <property type="entry name" value="Dxp_reductismrs"/>
    <property type="match status" value="1"/>
</dbReference>
<dbReference type="SUPFAM" id="SSF69055">
    <property type="entry name" value="1-deoxy-D-xylulose-5-phosphate reductoisomerase, C-terminal domain"/>
    <property type="match status" value="1"/>
</dbReference>
<dbReference type="SUPFAM" id="SSF55347">
    <property type="entry name" value="Glyceraldehyde-3-phosphate dehydrogenase-like, C-terminal domain"/>
    <property type="match status" value="1"/>
</dbReference>
<dbReference type="SUPFAM" id="SSF51735">
    <property type="entry name" value="NAD(P)-binding Rossmann-fold domains"/>
    <property type="match status" value="1"/>
</dbReference>
<keyword id="KW-0414">Isoprene biosynthesis</keyword>
<keyword id="KW-0464">Manganese</keyword>
<keyword id="KW-0479">Metal-binding</keyword>
<keyword id="KW-0521">NADP</keyword>
<keyword id="KW-0560">Oxidoreductase</keyword>
<protein>
    <recommendedName>
        <fullName evidence="1">1-deoxy-D-xylulose 5-phosphate reductoisomerase</fullName>
        <shortName evidence="1">DXP reductoisomerase</shortName>
        <ecNumber evidence="1">1.1.1.267</ecNumber>
    </recommendedName>
    <alternativeName>
        <fullName evidence="1">1-deoxyxylulose-5-phosphate reductoisomerase</fullName>
    </alternativeName>
    <alternativeName>
        <fullName evidence="1">2-C-methyl-D-erythritol 4-phosphate synthase</fullName>
    </alternativeName>
</protein>
<reference key="1">
    <citation type="journal article" date="2005" name="Genome Res.">
        <title>The Chlamydophila abortus genome sequence reveals an array of variable proteins that contribute to interspecies variation.</title>
        <authorList>
            <person name="Thomson N.R."/>
            <person name="Yeats C."/>
            <person name="Bell K."/>
            <person name="Holden M.T.G."/>
            <person name="Bentley S.D."/>
            <person name="Livingstone M."/>
            <person name="Cerdeno-Tarraga A.-M."/>
            <person name="Harris B."/>
            <person name="Doggett J."/>
            <person name="Ormond D."/>
            <person name="Mungall K."/>
            <person name="Clarke K."/>
            <person name="Feltwell T."/>
            <person name="Hance Z."/>
            <person name="Sanders M."/>
            <person name="Quail M.A."/>
            <person name="Price C."/>
            <person name="Barrell B.G."/>
            <person name="Parkhill J."/>
            <person name="Longbottom D."/>
        </authorList>
    </citation>
    <scope>NUCLEOTIDE SEQUENCE [LARGE SCALE GENOMIC DNA]</scope>
    <source>
        <strain>DSM 27085 / S26/3</strain>
    </source>
</reference>